<gene>
    <name type="primary">AnxB9</name>
    <name type="synonym">AnnIX</name>
    <name type="ORF">CG5730</name>
</gene>
<organism>
    <name type="scientific">Drosophila melanogaster</name>
    <name type="common">Fruit fly</name>
    <dbReference type="NCBI Taxonomy" id="7227"/>
    <lineage>
        <taxon>Eukaryota</taxon>
        <taxon>Metazoa</taxon>
        <taxon>Ecdysozoa</taxon>
        <taxon>Arthropoda</taxon>
        <taxon>Hexapoda</taxon>
        <taxon>Insecta</taxon>
        <taxon>Pterygota</taxon>
        <taxon>Neoptera</taxon>
        <taxon>Endopterygota</taxon>
        <taxon>Diptera</taxon>
        <taxon>Brachycera</taxon>
        <taxon>Muscomorpha</taxon>
        <taxon>Ephydroidea</taxon>
        <taxon>Drosophilidae</taxon>
        <taxon>Drosophila</taxon>
        <taxon>Sophophora</taxon>
    </lineage>
</organism>
<feature type="chain" id="PRO_0000067516" description="Annexin B9">
    <location>
        <begin position="1"/>
        <end position="324"/>
    </location>
</feature>
<feature type="repeat" description="Annexin 1" evidence="2">
    <location>
        <begin position="21"/>
        <end position="92"/>
    </location>
</feature>
<feature type="repeat" description="Annexin 2" evidence="2">
    <location>
        <begin position="93"/>
        <end position="164"/>
    </location>
</feature>
<feature type="repeat" description="Annexin 3" evidence="2">
    <location>
        <begin position="176"/>
        <end position="248"/>
    </location>
</feature>
<feature type="repeat" description="Annexin 4" evidence="2">
    <location>
        <begin position="252"/>
        <end position="323"/>
    </location>
</feature>
<feature type="splice variant" id="VSP_009664" description="In isoform b." evidence="4 5">
    <original>EDAETDIGYVLVTLTAW</original>
    <variation>DDLSGDYSYVLQCLASY</variation>
    <location>
        <begin position="308"/>
        <end position="324"/>
    </location>
</feature>
<feature type="splice variant" id="VSP_009665" description="In isoform c." evidence="4 6">
    <original>EDAETDIGYVLVTLTAW</original>
    <variation>GDTSGDYKRALLAIVGF</variation>
    <location>
        <begin position="308"/>
        <end position="324"/>
    </location>
</feature>
<feature type="sequence conflict" description="In Ref. 4; AAN71504." evidence="7" ref="4">
    <original>P</original>
    <variation>H</variation>
    <location>
        <position position="13"/>
    </location>
</feature>
<feature type="sequence conflict" description="In Ref. 1; AAG12161 and 6; AAA28370." evidence="7" ref="1 6">
    <original>M</original>
    <variation>L</variation>
    <location>
        <position position="268"/>
    </location>
</feature>
<accession>P22464</accession>
<accession>A4V371</accession>
<accession>B5RJE6</accession>
<accession>Q8IGJ8</accession>
<accession>Q969D3</accession>
<accession>Q9NG55</accession>
<accession>Q9VDF3</accession>
<reference key="1">
    <citation type="submission" date="2000-08" db="EMBL/GenBank/DDBJ databases">
        <title>Novel isoform of annexin IX from Drosophila melanogaster.</title>
        <authorList>
            <person name="Stoltzfus J.R."/>
            <person name="Grotewiel M.S."/>
        </authorList>
    </citation>
    <scope>NUCLEOTIDE SEQUENCE [MRNA] (ISOFORMS A AND B)</scope>
</reference>
<reference key="2">
    <citation type="journal article" date="2000" name="Science">
        <title>The genome sequence of Drosophila melanogaster.</title>
        <authorList>
            <person name="Adams M.D."/>
            <person name="Celniker S.E."/>
            <person name="Holt R.A."/>
            <person name="Evans C.A."/>
            <person name="Gocayne J.D."/>
            <person name="Amanatides P.G."/>
            <person name="Scherer S.E."/>
            <person name="Li P.W."/>
            <person name="Hoskins R.A."/>
            <person name="Galle R.F."/>
            <person name="George R.A."/>
            <person name="Lewis S.E."/>
            <person name="Richards S."/>
            <person name="Ashburner M."/>
            <person name="Henderson S.N."/>
            <person name="Sutton G.G."/>
            <person name="Wortman J.R."/>
            <person name="Yandell M.D."/>
            <person name="Zhang Q."/>
            <person name="Chen L.X."/>
            <person name="Brandon R.C."/>
            <person name="Rogers Y.-H.C."/>
            <person name="Blazej R.G."/>
            <person name="Champe M."/>
            <person name="Pfeiffer B.D."/>
            <person name="Wan K.H."/>
            <person name="Doyle C."/>
            <person name="Baxter E.G."/>
            <person name="Helt G."/>
            <person name="Nelson C.R."/>
            <person name="Miklos G.L.G."/>
            <person name="Abril J.F."/>
            <person name="Agbayani A."/>
            <person name="An H.-J."/>
            <person name="Andrews-Pfannkoch C."/>
            <person name="Baldwin D."/>
            <person name="Ballew R.M."/>
            <person name="Basu A."/>
            <person name="Baxendale J."/>
            <person name="Bayraktaroglu L."/>
            <person name="Beasley E.M."/>
            <person name="Beeson K.Y."/>
            <person name="Benos P.V."/>
            <person name="Berman B.P."/>
            <person name="Bhandari D."/>
            <person name="Bolshakov S."/>
            <person name="Borkova D."/>
            <person name="Botchan M.R."/>
            <person name="Bouck J."/>
            <person name="Brokstein P."/>
            <person name="Brottier P."/>
            <person name="Burtis K.C."/>
            <person name="Busam D.A."/>
            <person name="Butler H."/>
            <person name="Cadieu E."/>
            <person name="Center A."/>
            <person name="Chandra I."/>
            <person name="Cherry J.M."/>
            <person name="Cawley S."/>
            <person name="Dahlke C."/>
            <person name="Davenport L.B."/>
            <person name="Davies P."/>
            <person name="de Pablos B."/>
            <person name="Delcher A."/>
            <person name="Deng Z."/>
            <person name="Mays A.D."/>
            <person name="Dew I."/>
            <person name="Dietz S.M."/>
            <person name="Dodson K."/>
            <person name="Doup L.E."/>
            <person name="Downes M."/>
            <person name="Dugan-Rocha S."/>
            <person name="Dunkov B.C."/>
            <person name="Dunn P."/>
            <person name="Durbin K.J."/>
            <person name="Evangelista C.C."/>
            <person name="Ferraz C."/>
            <person name="Ferriera S."/>
            <person name="Fleischmann W."/>
            <person name="Fosler C."/>
            <person name="Gabrielian A.E."/>
            <person name="Garg N.S."/>
            <person name="Gelbart W.M."/>
            <person name="Glasser K."/>
            <person name="Glodek A."/>
            <person name="Gong F."/>
            <person name="Gorrell J.H."/>
            <person name="Gu Z."/>
            <person name="Guan P."/>
            <person name="Harris M."/>
            <person name="Harris N.L."/>
            <person name="Harvey D.A."/>
            <person name="Heiman T.J."/>
            <person name="Hernandez J.R."/>
            <person name="Houck J."/>
            <person name="Hostin D."/>
            <person name="Houston K.A."/>
            <person name="Howland T.J."/>
            <person name="Wei M.-H."/>
            <person name="Ibegwam C."/>
            <person name="Jalali M."/>
            <person name="Kalush F."/>
            <person name="Karpen G.H."/>
            <person name="Ke Z."/>
            <person name="Kennison J.A."/>
            <person name="Ketchum K.A."/>
            <person name="Kimmel B.E."/>
            <person name="Kodira C.D."/>
            <person name="Kraft C.L."/>
            <person name="Kravitz S."/>
            <person name="Kulp D."/>
            <person name="Lai Z."/>
            <person name="Lasko P."/>
            <person name="Lei Y."/>
            <person name="Levitsky A.A."/>
            <person name="Li J.H."/>
            <person name="Li Z."/>
            <person name="Liang Y."/>
            <person name="Lin X."/>
            <person name="Liu X."/>
            <person name="Mattei B."/>
            <person name="McIntosh T.C."/>
            <person name="McLeod M.P."/>
            <person name="McPherson D."/>
            <person name="Merkulov G."/>
            <person name="Milshina N.V."/>
            <person name="Mobarry C."/>
            <person name="Morris J."/>
            <person name="Moshrefi A."/>
            <person name="Mount S.M."/>
            <person name="Moy M."/>
            <person name="Murphy B."/>
            <person name="Murphy L."/>
            <person name="Muzny D.M."/>
            <person name="Nelson D.L."/>
            <person name="Nelson D.R."/>
            <person name="Nelson K.A."/>
            <person name="Nixon K."/>
            <person name="Nusskern D.R."/>
            <person name="Pacleb J.M."/>
            <person name="Palazzolo M."/>
            <person name="Pittman G.S."/>
            <person name="Pan S."/>
            <person name="Pollard J."/>
            <person name="Puri V."/>
            <person name="Reese M.G."/>
            <person name="Reinert K."/>
            <person name="Remington K."/>
            <person name="Saunders R.D.C."/>
            <person name="Scheeler F."/>
            <person name="Shen H."/>
            <person name="Shue B.C."/>
            <person name="Siden-Kiamos I."/>
            <person name="Simpson M."/>
            <person name="Skupski M.P."/>
            <person name="Smith T.J."/>
            <person name="Spier E."/>
            <person name="Spradling A.C."/>
            <person name="Stapleton M."/>
            <person name="Strong R."/>
            <person name="Sun E."/>
            <person name="Svirskas R."/>
            <person name="Tector C."/>
            <person name="Turner R."/>
            <person name="Venter E."/>
            <person name="Wang A.H."/>
            <person name="Wang X."/>
            <person name="Wang Z.-Y."/>
            <person name="Wassarman D.A."/>
            <person name="Weinstock G.M."/>
            <person name="Weissenbach J."/>
            <person name="Williams S.M."/>
            <person name="Woodage T."/>
            <person name="Worley K.C."/>
            <person name="Wu D."/>
            <person name="Yang S."/>
            <person name="Yao Q.A."/>
            <person name="Ye J."/>
            <person name="Yeh R.-F."/>
            <person name="Zaveri J.S."/>
            <person name="Zhan M."/>
            <person name="Zhang G."/>
            <person name="Zhao Q."/>
            <person name="Zheng L."/>
            <person name="Zheng X.H."/>
            <person name="Zhong F.N."/>
            <person name="Zhong W."/>
            <person name="Zhou X."/>
            <person name="Zhu S.C."/>
            <person name="Zhu X."/>
            <person name="Smith H.O."/>
            <person name="Gibbs R.A."/>
            <person name="Myers E.W."/>
            <person name="Rubin G.M."/>
            <person name="Venter J.C."/>
        </authorList>
    </citation>
    <scope>NUCLEOTIDE SEQUENCE [LARGE SCALE GENOMIC DNA]</scope>
    <source>
        <strain>Berkeley</strain>
    </source>
</reference>
<reference key="3">
    <citation type="journal article" date="2002" name="Genome Biol.">
        <title>Annotation of the Drosophila melanogaster euchromatic genome: a systematic review.</title>
        <authorList>
            <person name="Misra S."/>
            <person name="Crosby M.A."/>
            <person name="Mungall C.J."/>
            <person name="Matthews B.B."/>
            <person name="Campbell K.S."/>
            <person name="Hradecky P."/>
            <person name="Huang Y."/>
            <person name="Kaminker J.S."/>
            <person name="Millburn G.H."/>
            <person name="Prochnik S.E."/>
            <person name="Smith C.D."/>
            <person name="Tupy J.L."/>
            <person name="Whitfield E.J."/>
            <person name="Bayraktaroglu L."/>
            <person name="Berman B.P."/>
            <person name="Bettencourt B.R."/>
            <person name="Celniker S.E."/>
            <person name="de Grey A.D.N.J."/>
            <person name="Drysdale R.A."/>
            <person name="Harris N.L."/>
            <person name="Richter J."/>
            <person name="Russo S."/>
            <person name="Schroeder A.J."/>
            <person name="Shu S.Q."/>
            <person name="Stapleton M."/>
            <person name="Yamada C."/>
            <person name="Ashburner M."/>
            <person name="Gelbart W.M."/>
            <person name="Rubin G.M."/>
            <person name="Lewis S.E."/>
        </authorList>
    </citation>
    <scope>GENOME REANNOTATION</scope>
    <scope>ALTERNATIVE SPLICING</scope>
    <source>
        <strain>Berkeley</strain>
    </source>
</reference>
<reference key="4">
    <citation type="journal article" date="2002" name="Genome Biol.">
        <title>A Drosophila full-length cDNA resource.</title>
        <authorList>
            <person name="Stapleton M."/>
            <person name="Carlson J.W."/>
            <person name="Brokstein P."/>
            <person name="Yu C."/>
            <person name="Champe M."/>
            <person name="George R.A."/>
            <person name="Guarin H."/>
            <person name="Kronmiller B."/>
            <person name="Pacleb J.M."/>
            <person name="Park S."/>
            <person name="Wan K.H."/>
            <person name="Rubin G.M."/>
            <person name="Celniker S.E."/>
        </authorList>
    </citation>
    <scope>NUCLEOTIDE SEQUENCE [LARGE SCALE MRNA] (ISOFORMS B AND C)</scope>
    <source>
        <strain>Berkeley</strain>
        <tissue>Embryo</tissue>
        <tissue>Head</tissue>
    </source>
</reference>
<reference key="5">
    <citation type="submission" date="2008-09" db="EMBL/GenBank/DDBJ databases">
        <authorList>
            <person name="Carlson J."/>
            <person name="Booth B."/>
            <person name="Frise E."/>
            <person name="Park S."/>
            <person name="Wan K."/>
            <person name="Yu C."/>
            <person name="Celniker S."/>
        </authorList>
    </citation>
    <scope>NUCLEOTIDE SEQUENCE [LARGE SCALE MRNA] (ISOFORM C)</scope>
</reference>
<reference key="6">
    <citation type="journal article" date="1990" name="J. Biol. Chem.">
        <title>Two novel annexins from Drosophila melanogaster. Cloning, characterization, and differential expression in development.</title>
        <authorList>
            <person name="Johnston P.A."/>
            <person name="Perin M.S."/>
            <person name="Reynolds G.A."/>
            <person name="Wasserman S.A."/>
            <person name="Suedhof T.C."/>
        </authorList>
    </citation>
    <scope>NUCLEOTIDE SEQUENCE [MRNA] OF 29-324 (ISOFORM A)</scope>
    <scope>DEVELOPMENTAL STAGE</scope>
    <source>
        <tissue>Head</tissue>
    </source>
</reference>
<keyword id="KW-0025">Alternative splicing</keyword>
<keyword id="KW-0041">Annexin</keyword>
<keyword id="KW-0106">Calcium</keyword>
<keyword id="KW-0111">Calcium/phospholipid-binding</keyword>
<keyword id="KW-1185">Reference proteome</keyword>
<keyword id="KW-0677">Repeat</keyword>
<comment type="interaction">
    <interactant intactId="EBI-100056">
        <id>P22464</id>
    </interactant>
    <interactant intactId="EBI-179106">
        <id>Q9VL93</id>
        <label>Dmel\CG13117</label>
    </interactant>
    <organismsDiffer>false</organismsDiffer>
    <experiments>3</experiments>
</comment>
<comment type="interaction">
    <interactant intactId="EBI-26781545">
        <id>P22464-3</id>
    </interactant>
    <interactant intactId="EBI-179106">
        <id>Q9VL93</id>
        <label>Dmel\CG13117</label>
    </interactant>
    <organismsDiffer>false</organismsDiffer>
    <experiments>4</experiments>
</comment>
<comment type="alternative products">
    <event type="alternative splicing"/>
    <isoform>
        <id>P22464-1</id>
        <name>a</name>
        <name>A</name>
        <sequence type="displayed"/>
    </isoform>
    <isoform>
        <id>P22464-2</id>
        <name>b</name>
        <name>B</name>
        <name>D</name>
        <sequence type="described" ref="VSP_009664"/>
    </isoform>
    <isoform>
        <id>P22464-3</id>
        <name>c</name>
        <name>C</name>
        <sequence type="described" ref="VSP_009665"/>
    </isoform>
</comment>
<comment type="developmental stage">
    <text evidence="3">Expressed throughout development with highest expression seen in adults.</text>
</comment>
<comment type="domain">
    <text evidence="1">A pair of annexin repeats may form one binding site for calcium and phospholipid.</text>
</comment>
<comment type="similarity">
    <text evidence="2 7">Belongs to the annexin family.</text>
</comment>
<dbReference type="EMBL" id="AF261718">
    <property type="protein sequence ID" value="AAF69016.1"/>
    <property type="molecule type" value="mRNA"/>
</dbReference>
<dbReference type="EMBL" id="AY007377">
    <property type="protein sequence ID" value="AAG12161.1"/>
    <property type="molecule type" value="mRNA"/>
</dbReference>
<dbReference type="EMBL" id="AE014297">
    <property type="protein sequence ID" value="AAF55841.1"/>
    <property type="molecule type" value="Genomic_DNA"/>
</dbReference>
<dbReference type="EMBL" id="AE014297">
    <property type="protein sequence ID" value="AAN13848.1"/>
    <property type="molecule type" value="Genomic_DNA"/>
</dbReference>
<dbReference type="EMBL" id="AE014297">
    <property type="protein sequence ID" value="AAS65188.1"/>
    <property type="molecule type" value="Genomic_DNA"/>
</dbReference>
<dbReference type="EMBL" id="AE014297">
    <property type="protein sequence ID" value="AAS65189.1"/>
    <property type="molecule type" value="Genomic_DNA"/>
</dbReference>
<dbReference type="EMBL" id="AY118504">
    <property type="protein sequence ID" value="AAM49873.1"/>
    <property type="molecule type" value="mRNA"/>
</dbReference>
<dbReference type="EMBL" id="BT001749">
    <property type="protein sequence ID" value="AAN71504.1"/>
    <property type="molecule type" value="mRNA"/>
</dbReference>
<dbReference type="EMBL" id="BT044420">
    <property type="protein sequence ID" value="ACH92485.1"/>
    <property type="molecule type" value="mRNA"/>
</dbReference>
<dbReference type="EMBL" id="M34068">
    <property type="protein sequence ID" value="AAA28370.1"/>
    <property type="molecule type" value="mRNA"/>
</dbReference>
<dbReference type="PIR" id="A42234">
    <property type="entry name" value="LUFF9"/>
</dbReference>
<dbReference type="RefSeq" id="NP_001262796.1">
    <molecule id="P22464-3"/>
    <property type="nucleotide sequence ID" value="NM_001275867.1"/>
</dbReference>
<dbReference type="RefSeq" id="NP_001262797.1">
    <molecule id="P22464-3"/>
    <property type="nucleotide sequence ID" value="NM_001275868.1"/>
</dbReference>
<dbReference type="RefSeq" id="NP_476603.1">
    <molecule id="P22464-2"/>
    <property type="nucleotide sequence ID" value="NM_057255.3"/>
</dbReference>
<dbReference type="RefSeq" id="NP_476604.1">
    <molecule id="P22464-1"/>
    <property type="nucleotide sequence ID" value="NM_057256.4"/>
</dbReference>
<dbReference type="RefSeq" id="NP_996252.1">
    <molecule id="P22464-2"/>
    <property type="nucleotide sequence ID" value="NM_206530.2"/>
</dbReference>
<dbReference type="RefSeq" id="NP_996253.1">
    <molecule id="P22464-3"/>
    <property type="nucleotide sequence ID" value="NM_206531.2"/>
</dbReference>
<dbReference type="SMR" id="P22464"/>
<dbReference type="BioGRID" id="67463">
    <property type="interactions" value="15"/>
</dbReference>
<dbReference type="DIP" id="DIP-20322N"/>
<dbReference type="FunCoup" id="P22464">
    <property type="interactions" value="1155"/>
</dbReference>
<dbReference type="IntAct" id="P22464">
    <property type="interactions" value="168"/>
</dbReference>
<dbReference type="STRING" id="7227.FBpp0307770"/>
<dbReference type="PaxDb" id="7227-FBpp0088506"/>
<dbReference type="DNASU" id="42492"/>
<dbReference type="EnsemblMetazoa" id="FBtr0089517">
    <molecule id="P22464-1"/>
    <property type="protein sequence ID" value="FBpp0088505"/>
    <property type="gene ID" value="FBgn0000083"/>
</dbReference>
<dbReference type="EnsemblMetazoa" id="FBtr0089518">
    <molecule id="P22464-2"/>
    <property type="protein sequence ID" value="FBpp0088506"/>
    <property type="gene ID" value="FBgn0000083"/>
</dbReference>
<dbReference type="EnsemblMetazoa" id="FBtr0089519">
    <molecule id="P22464-3"/>
    <property type="protein sequence ID" value="FBpp0088986"/>
    <property type="gene ID" value="FBgn0000083"/>
</dbReference>
<dbReference type="EnsemblMetazoa" id="FBtr0089520">
    <molecule id="P22464-2"/>
    <property type="protein sequence ID" value="FBpp0088985"/>
    <property type="gene ID" value="FBgn0000083"/>
</dbReference>
<dbReference type="EnsemblMetazoa" id="FBtr0336797">
    <molecule id="P22464-3"/>
    <property type="protein sequence ID" value="FBpp0307769"/>
    <property type="gene ID" value="FBgn0000083"/>
</dbReference>
<dbReference type="EnsemblMetazoa" id="FBtr0336798">
    <molecule id="P22464-3"/>
    <property type="protein sequence ID" value="FBpp0307770"/>
    <property type="gene ID" value="FBgn0000083"/>
</dbReference>
<dbReference type="GeneID" id="42492"/>
<dbReference type="KEGG" id="dme:Dmel_CG5730"/>
<dbReference type="UCSC" id="CG5730-RD">
    <property type="organism name" value="d. melanogaster"/>
</dbReference>
<dbReference type="AGR" id="FB:FBgn0000083"/>
<dbReference type="CTD" id="42492"/>
<dbReference type="FlyBase" id="FBgn0000083">
    <property type="gene designation" value="AnxB9"/>
</dbReference>
<dbReference type="VEuPathDB" id="VectorBase:FBgn0000083"/>
<dbReference type="eggNOG" id="KOG0819">
    <property type="taxonomic scope" value="Eukaryota"/>
</dbReference>
<dbReference type="GeneTree" id="ENSGT00940000172288"/>
<dbReference type="HOGENOM" id="CLU_025300_0_2_1"/>
<dbReference type="InParanoid" id="P22464"/>
<dbReference type="OMA" id="DENQGVN"/>
<dbReference type="OrthoDB" id="37886at2759"/>
<dbReference type="PhylomeDB" id="P22464"/>
<dbReference type="BioGRID-ORCS" id="42492">
    <property type="hits" value="0 hits in 3 CRISPR screens"/>
</dbReference>
<dbReference type="ChiTaRS" id="AnxB9">
    <property type="organism name" value="fly"/>
</dbReference>
<dbReference type="GenomeRNAi" id="42492"/>
<dbReference type="PRO" id="PR:P22464"/>
<dbReference type="Proteomes" id="UP000000803">
    <property type="component" value="Chromosome 3R"/>
</dbReference>
<dbReference type="Bgee" id="FBgn0000083">
    <property type="expression patterns" value="Expressed in oviduct (Drosophila) and 215 other cell types or tissues"/>
</dbReference>
<dbReference type="ExpressionAtlas" id="P22464">
    <property type="expression patterns" value="baseline and differential"/>
</dbReference>
<dbReference type="GO" id="GO:0005938">
    <property type="term" value="C:cell cortex"/>
    <property type="evidence" value="ECO:0000314"/>
    <property type="project" value="FlyBase"/>
</dbReference>
<dbReference type="GO" id="GO:0005737">
    <property type="term" value="C:cytoplasm"/>
    <property type="evidence" value="ECO:0000318"/>
    <property type="project" value="GO_Central"/>
</dbReference>
<dbReference type="GO" id="GO:0012505">
    <property type="term" value="C:endomembrane system"/>
    <property type="evidence" value="ECO:0000314"/>
    <property type="project" value="FlyBase"/>
</dbReference>
<dbReference type="GO" id="GO:0005634">
    <property type="term" value="C:nucleus"/>
    <property type="evidence" value="ECO:0000318"/>
    <property type="project" value="GO_Central"/>
</dbReference>
<dbReference type="GO" id="GO:0005886">
    <property type="term" value="C:plasma membrane"/>
    <property type="evidence" value="ECO:0000318"/>
    <property type="project" value="GO_Central"/>
</dbReference>
<dbReference type="GO" id="GO:0012506">
    <property type="term" value="C:vesicle membrane"/>
    <property type="evidence" value="ECO:0000318"/>
    <property type="project" value="GO_Central"/>
</dbReference>
<dbReference type="GO" id="GO:0005509">
    <property type="term" value="F:calcium ion binding"/>
    <property type="evidence" value="ECO:0007669"/>
    <property type="project" value="InterPro"/>
</dbReference>
<dbReference type="GO" id="GO:0005544">
    <property type="term" value="F:calcium-dependent phospholipid binding"/>
    <property type="evidence" value="ECO:0000250"/>
    <property type="project" value="FlyBase"/>
</dbReference>
<dbReference type="GO" id="GO:0001786">
    <property type="term" value="F:phosphatidylserine binding"/>
    <property type="evidence" value="ECO:0000318"/>
    <property type="project" value="GO_Central"/>
</dbReference>
<dbReference type="GO" id="GO:0030507">
    <property type="term" value="F:spectrin binding"/>
    <property type="evidence" value="ECO:0000353"/>
    <property type="project" value="FlyBase"/>
</dbReference>
<dbReference type="GO" id="GO:0032509">
    <property type="term" value="P:endosome transport via multivesicular body sorting pathway"/>
    <property type="evidence" value="ECO:0000315"/>
    <property type="project" value="FlyBase"/>
</dbReference>
<dbReference type="GO" id="GO:0030011">
    <property type="term" value="P:maintenance of cell polarity"/>
    <property type="evidence" value="ECO:0000315"/>
    <property type="project" value="FlyBase"/>
</dbReference>
<dbReference type="GO" id="GO:0048190">
    <property type="term" value="P:wing disc dorsal/ventral pattern formation"/>
    <property type="evidence" value="ECO:0000316"/>
    <property type="project" value="FlyBase"/>
</dbReference>
<dbReference type="FunFam" id="1.10.220.10:FF:000001">
    <property type="entry name" value="Annexin"/>
    <property type="match status" value="1"/>
</dbReference>
<dbReference type="FunFam" id="1.10.220.10:FF:000002">
    <property type="entry name" value="Annexin"/>
    <property type="match status" value="1"/>
</dbReference>
<dbReference type="FunFam" id="1.10.220.10:FF:000004">
    <property type="entry name" value="Annexin"/>
    <property type="match status" value="1"/>
</dbReference>
<dbReference type="FunFam" id="1.10.220.10:FF:000010">
    <property type="entry name" value="Annexin"/>
    <property type="match status" value="1"/>
</dbReference>
<dbReference type="Gene3D" id="1.10.220.10">
    <property type="entry name" value="Annexin"/>
    <property type="match status" value="4"/>
</dbReference>
<dbReference type="InterPro" id="IPR001464">
    <property type="entry name" value="Annexin"/>
</dbReference>
<dbReference type="InterPro" id="IPR018502">
    <property type="entry name" value="Annexin_repeat"/>
</dbReference>
<dbReference type="InterPro" id="IPR018252">
    <property type="entry name" value="Annexin_repeat_CS"/>
</dbReference>
<dbReference type="InterPro" id="IPR037104">
    <property type="entry name" value="Annexin_sf"/>
</dbReference>
<dbReference type="PANTHER" id="PTHR10502">
    <property type="entry name" value="ANNEXIN"/>
    <property type="match status" value="1"/>
</dbReference>
<dbReference type="PANTHER" id="PTHR10502:SF233">
    <property type="entry name" value="ANNEXIN B9"/>
    <property type="match status" value="1"/>
</dbReference>
<dbReference type="Pfam" id="PF00191">
    <property type="entry name" value="Annexin"/>
    <property type="match status" value="4"/>
</dbReference>
<dbReference type="PRINTS" id="PR00196">
    <property type="entry name" value="ANNEXIN"/>
</dbReference>
<dbReference type="SMART" id="SM00335">
    <property type="entry name" value="ANX"/>
    <property type="match status" value="4"/>
</dbReference>
<dbReference type="SUPFAM" id="SSF47874">
    <property type="entry name" value="Annexin"/>
    <property type="match status" value="1"/>
</dbReference>
<dbReference type="PROSITE" id="PS00223">
    <property type="entry name" value="ANNEXIN_1"/>
    <property type="match status" value="3"/>
</dbReference>
<dbReference type="PROSITE" id="PS51897">
    <property type="entry name" value="ANNEXIN_2"/>
    <property type="match status" value="4"/>
</dbReference>
<name>ANXB9_DROME</name>
<sequence>MSSAEYYPFKCTPTVYPADPFDPVEDAAILRKAMKGFGTDEKAIIEILARRGIVQRLEIAEAFKTSYGKDLISDLKSELGGKFEDVILALMTPLPQFYAQELHDAISGLGTDEEAIIEILCTLSNYGIKTIAQFYEQSFGKSLESDLKGDTSGHFKRLCVSLVQGNRDENQGVDEAAAIADAQALHDAGEGQWGTDESTFNSILITRSYQQLRQIFLEYENLSGNDIEKAIKREFSGSVEKGFLAIVKCCKSKIDYFSERLHDSMAGMGTKDKTLIRIIVSRSEIDLGDIKEAFQNKYGKSLESWIKEDAETDIGYVLVTLTAW</sequence>
<proteinExistence type="evidence at protein level"/>
<evidence type="ECO:0000250" key="1"/>
<evidence type="ECO:0000255" key="2">
    <source>
        <dbReference type="PROSITE-ProRule" id="PRU01245"/>
    </source>
</evidence>
<evidence type="ECO:0000269" key="3">
    <source>
    </source>
</evidence>
<evidence type="ECO:0000303" key="4">
    <source>
    </source>
</evidence>
<evidence type="ECO:0000303" key="5">
    <source ref="1"/>
</evidence>
<evidence type="ECO:0000303" key="6">
    <source ref="5"/>
</evidence>
<evidence type="ECO:0000305" key="7"/>
<protein>
    <recommendedName>
        <fullName>Annexin B9</fullName>
    </recommendedName>
    <alternativeName>
        <fullName>Annexin IX</fullName>
    </alternativeName>
    <alternativeName>
        <fullName>Annexin-9</fullName>
    </alternativeName>
</protein>